<accession>A5ESE1</accession>
<keyword id="KW-0067">ATP-binding</keyword>
<keyword id="KW-0436">Ligase</keyword>
<keyword id="KW-0547">Nucleotide-binding</keyword>
<keyword id="KW-1185">Reference proteome</keyword>
<gene>
    <name type="ordered locus">BBta_7205</name>
</gene>
<name>GCS2_BRASB</name>
<proteinExistence type="inferred from homology"/>
<reference key="1">
    <citation type="journal article" date="2007" name="Science">
        <title>Legumes symbioses: absence of nod genes in photosynthetic bradyrhizobia.</title>
        <authorList>
            <person name="Giraud E."/>
            <person name="Moulin L."/>
            <person name="Vallenet D."/>
            <person name="Barbe V."/>
            <person name="Cytryn E."/>
            <person name="Avarre J.-C."/>
            <person name="Jaubert M."/>
            <person name="Simon D."/>
            <person name="Cartieaux F."/>
            <person name="Prin Y."/>
            <person name="Bena G."/>
            <person name="Hannibal L."/>
            <person name="Fardoux J."/>
            <person name="Kojadinovic M."/>
            <person name="Vuillet L."/>
            <person name="Lajus A."/>
            <person name="Cruveiller S."/>
            <person name="Rouy Z."/>
            <person name="Mangenot S."/>
            <person name="Segurens B."/>
            <person name="Dossat C."/>
            <person name="Franck W.L."/>
            <person name="Chang W.-S."/>
            <person name="Saunders E."/>
            <person name="Bruce D."/>
            <person name="Richardson P."/>
            <person name="Normand P."/>
            <person name="Dreyfus B."/>
            <person name="Pignol D."/>
            <person name="Stacey G."/>
            <person name="Emerich D."/>
            <person name="Vermeglio A."/>
            <person name="Medigue C."/>
            <person name="Sadowsky M."/>
        </authorList>
    </citation>
    <scope>NUCLEOTIDE SEQUENCE [LARGE SCALE GENOMIC DNA]</scope>
    <source>
        <strain>BTAi1 / ATCC BAA-1182</strain>
    </source>
</reference>
<evidence type="ECO:0000255" key="1">
    <source>
        <dbReference type="HAMAP-Rule" id="MF_01609"/>
    </source>
</evidence>
<evidence type="ECO:0000305" key="2"/>
<feature type="chain" id="PRO_0000323501" description="Putative glutamate--cysteine ligase 2">
    <location>
        <begin position="1"/>
        <end position="408"/>
    </location>
</feature>
<comment type="function">
    <text evidence="1">ATP-dependent carboxylate-amine ligase which exhibits weak glutamate--cysteine ligase activity.</text>
</comment>
<comment type="catalytic activity">
    <reaction evidence="1">
        <text>L-cysteine + L-glutamate + ATP = gamma-L-glutamyl-L-cysteine + ADP + phosphate + H(+)</text>
        <dbReference type="Rhea" id="RHEA:13285"/>
        <dbReference type="ChEBI" id="CHEBI:15378"/>
        <dbReference type="ChEBI" id="CHEBI:29985"/>
        <dbReference type="ChEBI" id="CHEBI:30616"/>
        <dbReference type="ChEBI" id="CHEBI:35235"/>
        <dbReference type="ChEBI" id="CHEBI:43474"/>
        <dbReference type="ChEBI" id="CHEBI:58173"/>
        <dbReference type="ChEBI" id="CHEBI:456216"/>
        <dbReference type="EC" id="6.3.2.2"/>
    </reaction>
</comment>
<comment type="similarity">
    <text evidence="1">Belongs to the glutamate--cysteine ligase type 2 family. YbdK subfamily.</text>
</comment>
<comment type="sequence caution" evidence="2">
    <conflict type="erroneous initiation">
        <sequence resource="EMBL-CDS" id="ABQ39085"/>
    </conflict>
</comment>
<sequence length="408" mass="45894">MDPRILERLRLGLSDDERRLVIRSATGGEDVTEYSFGIEEEYFLADARTLDVAIRTPDDLFEAANWSTGGQAMREMLQAQIEVATNVHVDSRDAREELKFLRREVASVAGQYGLTILACSTHPTAMWRSSQPTPRPRYAEMMEDLRIVGQRNMLCGMHVHVQLPDSERRFAVMRAMIPYIPVFIALSASSPFWNSRETGLKGYRLAAYDELPRTGLPELFTSKPEYDRYVAALTRSGVMPDESHVWWAMRPSLRHPTLELRAPDVCTSVDDAVAVASLYRALARHLYLHPDLADAVGNVERAIAVENKWRAQRYGTDCLFVAEEGPVTGQEILNRMIADIAPHAEALDCLAEVERCRTIMQFGSSADYQLQAYRESGGELSAVLRWIEVATVSRSDPPRTHAPVEPAQ</sequence>
<protein>
    <recommendedName>
        <fullName evidence="1">Putative glutamate--cysteine ligase 2</fullName>
        <ecNumber evidence="1">6.3.2.2</ecNumber>
    </recommendedName>
    <alternativeName>
        <fullName evidence="1">Gamma-glutamylcysteine synthetase 2</fullName>
        <shortName evidence="1">GCS 2</shortName>
        <shortName evidence="1">Gamma-GCS 2</shortName>
    </alternativeName>
</protein>
<organism>
    <name type="scientific">Bradyrhizobium sp. (strain BTAi1 / ATCC BAA-1182)</name>
    <dbReference type="NCBI Taxonomy" id="288000"/>
    <lineage>
        <taxon>Bacteria</taxon>
        <taxon>Pseudomonadati</taxon>
        <taxon>Pseudomonadota</taxon>
        <taxon>Alphaproteobacteria</taxon>
        <taxon>Hyphomicrobiales</taxon>
        <taxon>Nitrobacteraceae</taxon>
        <taxon>Bradyrhizobium</taxon>
    </lineage>
</organism>
<dbReference type="EC" id="6.3.2.2" evidence="1"/>
<dbReference type="EMBL" id="CP000494">
    <property type="protein sequence ID" value="ABQ39085.1"/>
    <property type="status" value="ALT_INIT"/>
    <property type="molecule type" value="Genomic_DNA"/>
</dbReference>
<dbReference type="RefSeq" id="WP_012047011.1">
    <property type="nucleotide sequence ID" value="NC_009485.1"/>
</dbReference>
<dbReference type="SMR" id="A5ESE1"/>
<dbReference type="STRING" id="288000.BBta_7205"/>
<dbReference type="KEGG" id="bbt:BBta_7205"/>
<dbReference type="eggNOG" id="COG2170">
    <property type="taxonomic scope" value="Bacteria"/>
</dbReference>
<dbReference type="HOGENOM" id="CLU_044848_1_0_5"/>
<dbReference type="OrthoDB" id="9769628at2"/>
<dbReference type="Proteomes" id="UP000000246">
    <property type="component" value="Chromosome"/>
</dbReference>
<dbReference type="GO" id="GO:0005524">
    <property type="term" value="F:ATP binding"/>
    <property type="evidence" value="ECO:0007669"/>
    <property type="project" value="UniProtKB-KW"/>
</dbReference>
<dbReference type="GO" id="GO:0004357">
    <property type="term" value="F:glutamate-cysteine ligase activity"/>
    <property type="evidence" value="ECO:0007669"/>
    <property type="project" value="UniProtKB-EC"/>
</dbReference>
<dbReference type="GO" id="GO:0042398">
    <property type="term" value="P:modified amino acid biosynthetic process"/>
    <property type="evidence" value="ECO:0007669"/>
    <property type="project" value="InterPro"/>
</dbReference>
<dbReference type="Gene3D" id="3.30.590.20">
    <property type="match status" value="1"/>
</dbReference>
<dbReference type="HAMAP" id="MF_01609">
    <property type="entry name" value="Glu_cys_ligase_2"/>
    <property type="match status" value="1"/>
</dbReference>
<dbReference type="InterPro" id="IPR050141">
    <property type="entry name" value="GCL_type2/YbdK_subfam"/>
</dbReference>
<dbReference type="InterPro" id="IPR006336">
    <property type="entry name" value="GCS2"/>
</dbReference>
<dbReference type="InterPro" id="IPR014746">
    <property type="entry name" value="Gln_synth/guanido_kin_cat_dom"/>
</dbReference>
<dbReference type="InterPro" id="IPR011793">
    <property type="entry name" value="YbdK"/>
</dbReference>
<dbReference type="NCBIfam" id="TIGR02050">
    <property type="entry name" value="gshA_cyan_rel"/>
    <property type="match status" value="1"/>
</dbReference>
<dbReference type="NCBIfam" id="NF010039">
    <property type="entry name" value="PRK13515.1"/>
    <property type="match status" value="1"/>
</dbReference>
<dbReference type="PANTHER" id="PTHR36510">
    <property type="entry name" value="GLUTAMATE--CYSTEINE LIGASE 2-RELATED"/>
    <property type="match status" value="1"/>
</dbReference>
<dbReference type="PANTHER" id="PTHR36510:SF1">
    <property type="entry name" value="GLUTAMATE--CYSTEINE LIGASE 2-RELATED"/>
    <property type="match status" value="1"/>
</dbReference>
<dbReference type="Pfam" id="PF04107">
    <property type="entry name" value="GCS2"/>
    <property type="match status" value="1"/>
</dbReference>
<dbReference type="SUPFAM" id="SSF55931">
    <property type="entry name" value="Glutamine synthetase/guanido kinase"/>
    <property type="match status" value="1"/>
</dbReference>